<protein>
    <recommendedName>
        <fullName evidence="1">UDP-N-acetylglucosamine--N-acetylmuramyl-(pentapeptide) pyrophosphoryl-undecaprenol N-acetylglucosamine transferase</fullName>
        <ecNumber evidence="1">2.4.1.227</ecNumber>
    </recommendedName>
    <alternativeName>
        <fullName evidence="1">Undecaprenyl-PP-MurNAc-pentapeptide-UDPGlcNAc GlcNAc transferase</fullName>
    </alternativeName>
</protein>
<keyword id="KW-0131">Cell cycle</keyword>
<keyword id="KW-0132">Cell division</keyword>
<keyword id="KW-0997">Cell inner membrane</keyword>
<keyword id="KW-1003">Cell membrane</keyword>
<keyword id="KW-0133">Cell shape</keyword>
<keyword id="KW-0961">Cell wall biogenesis/degradation</keyword>
<keyword id="KW-0328">Glycosyltransferase</keyword>
<keyword id="KW-0472">Membrane</keyword>
<keyword id="KW-0573">Peptidoglycan synthesis</keyword>
<keyword id="KW-0808">Transferase</keyword>
<organism>
    <name type="scientific">Prochlorococcus marinus (strain NATL1A)</name>
    <dbReference type="NCBI Taxonomy" id="167555"/>
    <lineage>
        <taxon>Bacteria</taxon>
        <taxon>Bacillati</taxon>
        <taxon>Cyanobacteriota</taxon>
        <taxon>Cyanophyceae</taxon>
        <taxon>Synechococcales</taxon>
        <taxon>Prochlorococcaceae</taxon>
        <taxon>Prochlorococcus</taxon>
    </lineage>
</organism>
<gene>
    <name evidence="1" type="primary">murG</name>
    <name type="ordered locus">NATL1_02731</name>
</gene>
<proteinExistence type="inferred from homology"/>
<dbReference type="EC" id="2.4.1.227" evidence="1"/>
<dbReference type="EMBL" id="CP000553">
    <property type="protein sequence ID" value="ABM74837.1"/>
    <property type="molecule type" value="Genomic_DNA"/>
</dbReference>
<dbReference type="RefSeq" id="WP_011823054.1">
    <property type="nucleotide sequence ID" value="NC_008819.1"/>
</dbReference>
<dbReference type="SMR" id="A2C027"/>
<dbReference type="CAZy" id="GT28">
    <property type="family name" value="Glycosyltransferase Family 28"/>
</dbReference>
<dbReference type="KEGG" id="pme:NATL1_02731"/>
<dbReference type="eggNOG" id="COG0707">
    <property type="taxonomic scope" value="Bacteria"/>
</dbReference>
<dbReference type="HOGENOM" id="CLU_037404_0_1_3"/>
<dbReference type="UniPathway" id="UPA00219"/>
<dbReference type="Proteomes" id="UP000002592">
    <property type="component" value="Chromosome"/>
</dbReference>
<dbReference type="GO" id="GO:0005886">
    <property type="term" value="C:plasma membrane"/>
    <property type="evidence" value="ECO:0007669"/>
    <property type="project" value="UniProtKB-SubCell"/>
</dbReference>
<dbReference type="GO" id="GO:0051991">
    <property type="term" value="F:UDP-N-acetyl-D-glucosamine:N-acetylmuramoyl-L-alanyl-D-glutamyl-meso-2,6-diaminopimelyl-D-alanyl-D-alanine-diphosphoundecaprenol 4-beta-N-acetylglucosaminlytransferase activity"/>
    <property type="evidence" value="ECO:0007669"/>
    <property type="project" value="RHEA"/>
</dbReference>
<dbReference type="GO" id="GO:0050511">
    <property type="term" value="F:undecaprenyldiphospho-muramoylpentapeptide beta-N-acetylglucosaminyltransferase activity"/>
    <property type="evidence" value="ECO:0007669"/>
    <property type="project" value="UniProtKB-UniRule"/>
</dbReference>
<dbReference type="GO" id="GO:0005975">
    <property type="term" value="P:carbohydrate metabolic process"/>
    <property type="evidence" value="ECO:0007669"/>
    <property type="project" value="InterPro"/>
</dbReference>
<dbReference type="GO" id="GO:0051301">
    <property type="term" value="P:cell division"/>
    <property type="evidence" value="ECO:0007669"/>
    <property type="project" value="UniProtKB-KW"/>
</dbReference>
<dbReference type="GO" id="GO:0071555">
    <property type="term" value="P:cell wall organization"/>
    <property type="evidence" value="ECO:0007669"/>
    <property type="project" value="UniProtKB-KW"/>
</dbReference>
<dbReference type="GO" id="GO:0030259">
    <property type="term" value="P:lipid glycosylation"/>
    <property type="evidence" value="ECO:0007669"/>
    <property type="project" value="UniProtKB-UniRule"/>
</dbReference>
<dbReference type="GO" id="GO:0009252">
    <property type="term" value="P:peptidoglycan biosynthetic process"/>
    <property type="evidence" value="ECO:0007669"/>
    <property type="project" value="UniProtKB-UniRule"/>
</dbReference>
<dbReference type="GO" id="GO:0008360">
    <property type="term" value="P:regulation of cell shape"/>
    <property type="evidence" value="ECO:0007669"/>
    <property type="project" value="UniProtKB-KW"/>
</dbReference>
<dbReference type="CDD" id="cd03785">
    <property type="entry name" value="GT28_MurG"/>
    <property type="match status" value="1"/>
</dbReference>
<dbReference type="Gene3D" id="3.40.50.2000">
    <property type="entry name" value="Glycogen Phosphorylase B"/>
    <property type="match status" value="2"/>
</dbReference>
<dbReference type="HAMAP" id="MF_00033">
    <property type="entry name" value="MurG"/>
    <property type="match status" value="1"/>
</dbReference>
<dbReference type="InterPro" id="IPR006009">
    <property type="entry name" value="GlcNAc_MurG"/>
</dbReference>
<dbReference type="InterPro" id="IPR007235">
    <property type="entry name" value="Glyco_trans_28_C"/>
</dbReference>
<dbReference type="InterPro" id="IPR004276">
    <property type="entry name" value="GlycoTrans_28_N"/>
</dbReference>
<dbReference type="NCBIfam" id="TIGR01133">
    <property type="entry name" value="murG"/>
    <property type="match status" value="1"/>
</dbReference>
<dbReference type="PANTHER" id="PTHR21015:SF22">
    <property type="entry name" value="GLYCOSYLTRANSFERASE"/>
    <property type="match status" value="1"/>
</dbReference>
<dbReference type="PANTHER" id="PTHR21015">
    <property type="entry name" value="UDP-N-ACETYLGLUCOSAMINE--N-ACETYLMURAMYL-(PENTAPEPTIDE) PYROPHOSPHORYL-UNDECAPRENOL N-ACETYLGLUCOSAMINE TRANSFERASE 1"/>
    <property type="match status" value="1"/>
</dbReference>
<dbReference type="Pfam" id="PF04101">
    <property type="entry name" value="Glyco_tran_28_C"/>
    <property type="match status" value="1"/>
</dbReference>
<dbReference type="Pfam" id="PF03033">
    <property type="entry name" value="Glyco_transf_28"/>
    <property type="match status" value="1"/>
</dbReference>
<dbReference type="SUPFAM" id="SSF53756">
    <property type="entry name" value="UDP-Glycosyltransferase/glycogen phosphorylase"/>
    <property type="match status" value="1"/>
</dbReference>
<comment type="function">
    <text evidence="1">Cell wall formation. Catalyzes the transfer of a GlcNAc subunit on undecaprenyl-pyrophosphoryl-MurNAc-pentapeptide (lipid intermediate I) to form undecaprenyl-pyrophosphoryl-MurNAc-(pentapeptide)GlcNAc (lipid intermediate II).</text>
</comment>
<comment type="catalytic activity">
    <reaction evidence="1">
        <text>di-trans,octa-cis-undecaprenyl diphospho-N-acetyl-alpha-D-muramoyl-L-alanyl-D-glutamyl-meso-2,6-diaminopimeloyl-D-alanyl-D-alanine + UDP-N-acetyl-alpha-D-glucosamine = di-trans,octa-cis-undecaprenyl diphospho-[N-acetyl-alpha-D-glucosaminyl-(1-&gt;4)]-N-acetyl-alpha-D-muramoyl-L-alanyl-D-glutamyl-meso-2,6-diaminopimeloyl-D-alanyl-D-alanine + UDP + H(+)</text>
        <dbReference type="Rhea" id="RHEA:31227"/>
        <dbReference type="ChEBI" id="CHEBI:15378"/>
        <dbReference type="ChEBI" id="CHEBI:57705"/>
        <dbReference type="ChEBI" id="CHEBI:58223"/>
        <dbReference type="ChEBI" id="CHEBI:61387"/>
        <dbReference type="ChEBI" id="CHEBI:61388"/>
        <dbReference type="EC" id="2.4.1.227"/>
    </reaction>
</comment>
<comment type="pathway">
    <text evidence="1">Cell wall biogenesis; peptidoglycan biosynthesis.</text>
</comment>
<comment type="subcellular location">
    <subcellularLocation>
        <location evidence="1">Cell inner membrane</location>
        <topology evidence="1">Peripheral membrane protein</topology>
        <orientation evidence="1">Cytoplasmic side</orientation>
    </subcellularLocation>
</comment>
<comment type="similarity">
    <text evidence="1">Belongs to the glycosyltransferase 28 family. MurG subfamily.</text>
</comment>
<sequence>MPRLLIAASGTGGHIYPALSFADSLSNSWEIVWLGVPNRLEVELVPEKYNLIKLKVGGLQGNIFRKLFDLCKLLFASVQVSVLLRQKKINVIFTTGGYISAPCILGAKMAGIPVLLHESNAIPGKVTRLLGRFCDHVALGIPSASEYLQRCRTSFTGTPVRTEFLFEKSLPSWVPLGEGVLIVVMGGSQGAIKMNEMVRKILPCLIEKGCRVVHLTGKNDCFYRNRDQEKSHPNLVVRDFSDEMPALLRNADLAISRSGAGAICELMVTKTPSILIPFPSSTDQHQELNAAYMARFGGAIIVNQHDPEKNILKNIVSNLLDSNSLREMKLNMNNHDYSYPEKKIFEIIHSIS</sequence>
<reference key="1">
    <citation type="journal article" date="2007" name="PLoS Genet.">
        <title>Patterns and implications of gene gain and loss in the evolution of Prochlorococcus.</title>
        <authorList>
            <person name="Kettler G.C."/>
            <person name="Martiny A.C."/>
            <person name="Huang K."/>
            <person name="Zucker J."/>
            <person name="Coleman M.L."/>
            <person name="Rodrigue S."/>
            <person name="Chen F."/>
            <person name="Lapidus A."/>
            <person name="Ferriera S."/>
            <person name="Johnson J."/>
            <person name="Steglich C."/>
            <person name="Church G.M."/>
            <person name="Richardson P."/>
            <person name="Chisholm S.W."/>
        </authorList>
    </citation>
    <scope>NUCLEOTIDE SEQUENCE [LARGE SCALE GENOMIC DNA]</scope>
    <source>
        <strain>NATL1A</strain>
    </source>
</reference>
<name>MURG_PROM1</name>
<evidence type="ECO:0000255" key="1">
    <source>
        <dbReference type="HAMAP-Rule" id="MF_00033"/>
    </source>
</evidence>
<accession>A2C027</accession>
<feature type="chain" id="PRO_0000315142" description="UDP-N-acetylglucosamine--N-acetylmuramyl-(pentapeptide) pyrophosphoryl-undecaprenol N-acetylglucosamine transferase">
    <location>
        <begin position="1"/>
        <end position="352"/>
    </location>
</feature>
<feature type="binding site" evidence="1">
    <location>
        <begin position="11"/>
        <end position="13"/>
    </location>
    <ligand>
        <name>UDP-N-acetyl-alpha-D-glucosamine</name>
        <dbReference type="ChEBI" id="CHEBI:57705"/>
    </ligand>
</feature>
<feature type="binding site" evidence="1">
    <location>
        <position position="120"/>
    </location>
    <ligand>
        <name>UDP-N-acetyl-alpha-D-glucosamine</name>
        <dbReference type="ChEBI" id="CHEBI:57705"/>
    </ligand>
</feature>
<feature type="binding site" evidence="1">
    <location>
        <position position="161"/>
    </location>
    <ligand>
        <name>UDP-N-acetyl-alpha-D-glucosamine</name>
        <dbReference type="ChEBI" id="CHEBI:57705"/>
    </ligand>
</feature>
<feature type="binding site" evidence="1">
    <location>
        <position position="188"/>
    </location>
    <ligand>
        <name>UDP-N-acetyl-alpha-D-glucosamine</name>
        <dbReference type="ChEBI" id="CHEBI:57705"/>
    </ligand>
</feature>
<feature type="binding site" evidence="1">
    <location>
        <position position="286"/>
    </location>
    <ligand>
        <name>UDP-N-acetyl-alpha-D-glucosamine</name>
        <dbReference type="ChEBI" id="CHEBI:57705"/>
    </ligand>
</feature>